<keyword id="KW-1185">Reference proteome</keyword>
<keyword id="KW-0687">Ribonucleoprotein</keyword>
<keyword id="KW-0689">Ribosomal protein</keyword>
<keyword id="KW-0694">RNA-binding</keyword>
<keyword id="KW-0699">rRNA-binding</keyword>
<organism>
    <name type="scientific">Shewanella woodyi (strain ATCC 51908 / MS32)</name>
    <dbReference type="NCBI Taxonomy" id="392500"/>
    <lineage>
        <taxon>Bacteria</taxon>
        <taxon>Pseudomonadati</taxon>
        <taxon>Pseudomonadota</taxon>
        <taxon>Gammaproteobacteria</taxon>
        <taxon>Alteromonadales</taxon>
        <taxon>Shewanellaceae</taxon>
        <taxon>Shewanella</taxon>
    </lineage>
</organism>
<dbReference type="EMBL" id="CP000961">
    <property type="protein sequence ID" value="ACA88930.1"/>
    <property type="molecule type" value="Genomic_DNA"/>
</dbReference>
<dbReference type="RefSeq" id="WP_012327253.1">
    <property type="nucleotide sequence ID" value="NC_010506.1"/>
</dbReference>
<dbReference type="SMR" id="B1KMX3"/>
<dbReference type="STRING" id="392500.Swoo_4680"/>
<dbReference type="KEGG" id="swd:Swoo_4680"/>
<dbReference type="eggNOG" id="COG0093">
    <property type="taxonomic scope" value="Bacteria"/>
</dbReference>
<dbReference type="HOGENOM" id="CLU_095071_2_1_6"/>
<dbReference type="Proteomes" id="UP000002168">
    <property type="component" value="Chromosome"/>
</dbReference>
<dbReference type="GO" id="GO:0022625">
    <property type="term" value="C:cytosolic large ribosomal subunit"/>
    <property type="evidence" value="ECO:0007669"/>
    <property type="project" value="TreeGrafter"/>
</dbReference>
<dbReference type="GO" id="GO:0070180">
    <property type="term" value="F:large ribosomal subunit rRNA binding"/>
    <property type="evidence" value="ECO:0007669"/>
    <property type="project" value="TreeGrafter"/>
</dbReference>
<dbReference type="GO" id="GO:0003735">
    <property type="term" value="F:structural constituent of ribosome"/>
    <property type="evidence" value="ECO:0007669"/>
    <property type="project" value="InterPro"/>
</dbReference>
<dbReference type="GO" id="GO:0006412">
    <property type="term" value="P:translation"/>
    <property type="evidence" value="ECO:0007669"/>
    <property type="project" value="UniProtKB-UniRule"/>
</dbReference>
<dbReference type="CDD" id="cd00337">
    <property type="entry name" value="Ribosomal_uL14"/>
    <property type="match status" value="1"/>
</dbReference>
<dbReference type="FunFam" id="2.40.150.20:FF:000001">
    <property type="entry name" value="50S ribosomal protein L14"/>
    <property type="match status" value="1"/>
</dbReference>
<dbReference type="Gene3D" id="2.40.150.20">
    <property type="entry name" value="Ribosomal protein L14"/>
    <property type="match status" value="1"/>
</dbReference>
<dbReference type="HAMAP" id="MF_01367">
    <property type="entry name" value="Ribosomal_uL14"/>
    <property type="match status" value="1"/>
</dbReference>
<dbReference type="InterPro" id="IPR000218">
    <property type="entry name" value="Ribosomal_uL14"/>
</dbReference>
<dbReference type="InterPro" id="IPR005745">
    <property type="entry name" value="Ribosomal_uL14_bac-type"/>
</dbReference>
<dbReference type="InterPro" id="IPR019972">
    <property type="entry name" value="Ribosomal_uL14_CS"/>
</dbReference>
<dbReference type="InterPro" id="IPR036853">
    <property type="entry name" value="Ribosomal_uL14_sf"/>
</dbReference>
<dbReference type="NCBIfam" id="TIGR01067">
    <property type="entry name" value="rplN_bact"/>
    <property type="match status" value="1"/>
</dbReference>
<dbReference type="PANTHER" id="PTHR11761">
    <property type="entry name" value="50S/60S RIBOSOMAL PROTEIN L14/L23"/>
    <property type="match status" value="1"/>
</dbReference>
<dbReference type="PANTHER" id="PTHR11761:SF3">
    <property type="entry name" value="LARGE RIBOSOMAL SUBUNIT PROTEIN UL14M"/>
    <property type="match status" value="1"/>
</dbReference>
<dbReference type="Pfam" id="PF00238">
    <property type="entry name" value="Ribosomal_L14"/>
    <property type="match status" value="1"/>
</dbReference>
<dbReference type="SMART" id="SM01374">
    <property type="entry name" value="Ribosomal_L14"/>
    <property type="match status" value="1"/>
</dbReference>
<dbReference type="SUPFAM" id="SSF50193">
    <property type="entry name" value="Ribosomal protein L14"/>
    <property type="match status" value="1"/>
</dbReference>
<dbReference type="PROSITE" id="PS00049">
    <property type="entry name" value="RIBOSOMAL_L14"/>
    <property type="match status" value="1"/>
</dbReference>
<protein>
    <recommendedName>
        <fullName evidence="1">Large ribosomal subunit protein uL14</fullName>
    </recommendedName>
    <alternativeName>
        <fullName evidence="2">50S ribosomal protein L14</fullName>
    </alternativeName>
</protein>
<comment type="function">
    <text evidence="1">Binds to 23S rRNA. Forms part of two intersubunit bridges in the 70S ribosome.</text>
</comment>
<comment type="subunit">
    <text evidence="1">Part of the 50S ribosomal subunit. Forms a cluster with proteins L3 and L19. In the 70S ribosome, L14 and L19 interact and together make contacts with the 16S rRNA in bridges B5 and B8.</text>
</comment>
<comment type="similarity">
    <text evidence="1">Belongs to the universal ribosomal protein uL14 family.</text>
</comment>
<feature type="chain" id="PRO_1000144330" description="Large ribosomal subunit protein uL14">
    <location>
        <begin position="1"/>
        <end position="122"/>
    </location>
</feature>
<accession>B1KMX3</accession>
<evidence type="ECO:0000255" key="1">
    <source>
        <dbReference type="HAMAP-Rule" id="MF_01367"/>
    </source>
</evidence>
<evidence type="ECO:0000305" key="2"/>
<reference key="1">
    <citation type="submission" date="2008-02" db="EMBL/GenBank/DDBJ databases">
        <title>Complete sequence of Shewanella woodyi ATCC 51908.</title>
        <authorList>
            <consortium name="US DOE Joint Genome Institute"/>
            <person name="Copeland A."/>
            <person name="Lucas S."/>
            <person name="Lapidus A."/>
            <person name="Glavina del Rio T."/>
            <person name="Dalin E."/>
            <person name="Tice H."/>
            <person name="Bruce D."/>
            <person name="Goodwin L."/>
            <person name="Pitluck S."/>
            <person name="Sims D."/>
            <person name="Brettin T."/>
            <person name="Detter J.C."/>
            <person name="Han C."/>
            <person name="Kuske C.R."/>
            <person name="Schmutz J."/>
            <person name="Larimer F."/>
            <person name="Land M."/>
            <person name="Hauser L."/>
            <person name="Kyrpides N."/>
            <person name="Lykidis A."/>
            <person name="Zhao J.-S."/>
            <person name="Richardson P."/>
        </authorList>
    </citation>
    <scope>NUCLEOTIDE SEQUENCE [LARGE SCALE GENOMIC DNA]</scope>
    <source>
        <strain>ATCC 51908 / MS32</strain>
    </source>
</reference>
<proteinExistence type="inferred from homology"/>
<gene>
    <name evidence="1" type="primary">rplN</name>
    <name type="ordered locus">Swoo_4680</name>
</gene>
<name>RL14_SHEWM</name>
<sequence>MIQMQSTLDVACNSGARRVQCIKVLGGSHRRYAGIGDIIKVSVKEAIPRGKAKKGDVYSAVVVRTKKGVRRPDGSVIRFDRNAAVLLNANNAPIGTRIFGPVTRELRTEQFMKIVSLAPEVL</sequence>